<keyword id="KW-0963">Cytoplasm</keyword>
<keyword id="KW-0329">Glyoxylate bypass</keyword>
<keyword id="KW-0460">Magnesium</keyword>
<keyword id="KW-0479">Metal-binding</keyword>
<keyword id="KW-0558">Oxidation</keyword>
<keyword id="KW-0808">Transferase</keyword>
<keyword id="KW-0816">Tricarboxylic acid cycle</keyword>
<gene>
    <name evidence="1" type="primary">glcB</name>
    <name type="ordered locus">Mjls_2844</name>
</gene>
<proteinExistence type="inferred from homology"/>
<feature type="chain" id="PRO_1000056907" description="Malate synthase G">
    <location>
        <begin position="1"/>
        <end position="731"/>
    </location>
</feature>
<feature type="active site" description="Proton acceptor" evidence="1">
    <location>
        <position position="342"/>
    </location>
</feature>
<feature type="active site" description="Proton donor" evidence="1">
    <location>
        <position position="636"/>
    </location>
</feature>
<feature type="binding site" evidence="1">
    <location>
        <position position="118"/>
    </location>
    <ligand>
        <name>acetyl-CoA</name>
        <dbReference type="ChEBI" id="CHEBI:57288"/>
    </ligand>
</feature>
<feature type="binding site" evidence="1">
    <location>
        <begin position="125"/>
        <end position="126"/>
    </location>
    <ligand>
        <name>acetyl-CoA</name>
        <dbReference type="ChEBI" id="CHEBI:57288"/>
    </ligand>
</feature>
<feature type="binding site" evidence="1">
    <location>
        <position position="277"/>
    </location>
    <ligand>
        <name>acetyl-CoA</name>
        <dbReference type="ChEBI" id="CHEBI:57288"/>
    </ligand>
</feature>
<feature type="binding site" evidence="1">
    <location>
        <position position="314"/>
    </location>
    <ligand>
        <name>acetyl-CoA</name>
        <dbReference type="ChEBI" id="CHEBI:57288"/>
    </ligand>
</feature>
<feature type="binding site" evidence="1">
    <location>
        <position position="342"/>
    </location>
    <ligand>
        <name>glyoxylate</name>
        <dbReference type="ChEBI" id="CHEBI:36655"/>
    </ligand>
</feature>
<feature type="binding site" evidence="1">
    <location>
        <position position="437"/>
    </location>
    <ligand>
        <name>glyoxylate</name>
        <dbReference type="ChEBI" id="CHEBI:36655"/>
    </ligand>
</feature>
<feature type="binding site" evidence="1">
    <location>
        <position position="437"/>
    </location>
    <ligand>
        <name>Mg(2+)</name>
        <dbReference type="ChEBI" id="CHEBI:18420"/>
    </ligand>
</feature>
<feature type="binding site" evidence="1">
    <location>
        <begin position="462"/>
        <end position="465"/>
    </location>
    <ligand>
        <name>glyoxylate</name>
        <dbReference type="ChEBI" id="CHEBI:36655"/>
    </ligand>
</feature>
<feature type="binding site" evidence="1">
    <location>
        <position position="465"/>
    </location>
    <ligand>
        <name>Mg(2+)</name>
        <dbReference type="ChEBI" id="CHEBI:18420"/>
    </ligand>
</feature>
<feature type="binding site" evidence="1">
    <location>
        <position position="546"/>
    </location>
    <ligand>
        <name>acetyl-CoA</name>
        <dbReference type="ChEBI" id="CHEBI:57288"/>
    </ligand>
</feature>
<feature type="modified residue" description="Cysteine sulfenic acid (-SOH)" evidence="1">
    <location>
        <position position="622"/>
    </location>
</feature>
<organism>
    <name type="scientific">Mycobacterium sp. (strain JLS)</name>
    <dbReference type="NCBI Taxonomy" id="164757"/>
    <lineage>
        <taxon>Bacteria</taxon>
        <taxon>Bacillati</taxon>
        <taxon>Actinomycetota</taxon>
        <taxon>Actinomycetes</taxon>
        <taxon>Mycobacteriales</taxon>
        <taxon>Mycobacteriaceae</taxon>
        <taxon>Mycobacterium</taxon>
    </lineage>
</organism>
<evidence type="ECO:0000255" key="1">
    <source>
        <dbReference type="HAMAP-Rule" id="MF_00641"/>
    </source>
</evidence>
<dbReference type="EC" id="2.3.3.9" evidence="1"/>
<dbReference type="EMBL" id="CP000580">
    <property type="protein sequence ID" value="ABN98624.1"/>
    <property type="molecule type" value="Genomic_DNA"/>
</dbReference>
<dbReference type="SMR" id="A3Q0E7"/>
<dbReference type="KEGG" id="mjl:Mjls_2844"/>
<dbReference type="HOGENOM" id="CLU_028446_1_0_11"/>
<dbReference type="BioCyc" id="MSP164757:G1G8C-2863-MONOMER"/>
<dbReference type="UniPathway" id="UPA00703">
    <property type="reaction ID" value="UER00720"/>
</dbReference>
<dbReference type="GO" id="GO:0005829">
    <property type="term" value="C:cytosol"/>
    <property type="evidence" value="ECO:0007669"/>
    <property type="project" value="TreeGrafter"/>
</dbReference>
<dbReference type="GO" id="GO:0000287">
    <property type="term" value="F:magnesium ion binding"/>
    <property type="evidence" value="ECO:0007669"/>
    <property type="project" value="TreeGrafter"/>
</dbReference>
<dbReference type="GO" id="GO:0004474">
    <property type="term" value="F:malate synthase activity"/>
    <property type="evidence" value="ECO:0007669"/>
    <property type="project" value="UniProtKB-UniRule"/>
</dbReference>
<dbReference type="GO" id="GO:0009436">
    <property type="term" value="P:glyoxylate catabolic process"/>
    <property type="evidence" value="ECO:0007669"/>
    <property type="project" value="TreeGrafter"/>
</dbReference>
<dbReference type="GO" id="GO:0006097">
    <property type="term" value="P:glyoxylate cycle"/>
    <property type="evidence" value="ECO:0007669"/>
    <property type="project" value="UniProtKB-UniRule"/>
</dbReference>
<dbReference type="GO" id="GO:0006099">
    <property type="term" value="P:tricarboxylic acid cycle"/>
    <property type="evidence" value="ECO:0007669"/>
    <property type="project" value="UniProtKB-KW"/>
</dbReference>
<dbReference type="CDD" id="cd00728">
    <property type="entry name" value="malate_synt_G"/>
    <property type="match status" value="1"/>
</dbReference>
<dbReference type="FunFam" id="3.20.20.360:FF:000002">
    <property type="entry name" value="Malate synthase G"/>
    <property type="match status" value="1"/>
</dbReference>
<dbReference type="Gene3D" id="3.20.20.360">
    <property type="entry name" value="Malate synthase, domain 3"/>
    <property type="match status" value="2"/>
</dbReference>
<dbReference type="Gene3D" id="1.20.1220.12">
    <property type="entry name" value="Malate synthase, domain III"/>
    <property type="match status" value="1"/>
</dbReference>
<dbReference type="HAMAP" id="MF_00641">
    <property type="entry name" value="Malate_synth_G"/>
    <property type="match status" value="1"/>
</dbReference>
<dbReference type="InterPro" id="IPR044856">
    <property type="entry name" value="Malate_synth_C_sf"/>
</dbReference>
<dbReference type="InterPro" id="IPR011076">
    <property type="entry name" value="Malate_synth_sf"/>
</dbReference>
<dbReference type="InterPro" id="IPR001465">
    <property type="entry name" value="Malate_synthase_TIM"/>
</dbReference>
<dbReference type="InterPro" id="IPR006253">
    <property type="entry name" value="Malate_synthG"/>
</dbReference>
<dbReference type="InterPro" id="IPR048355">
    <property type="entry name" value="MS_C"/>
</dbReference>
<dbReference type="InterPro" id="IPR048356">
    <property type="entry name" value="MS_N"/>
</dbReference>
<dbReference type="InterPro" id="IPR046363">
    <property type="entry name" value="MS_N_TIM-barrel_dom"/>
</dbReference>
<dbReference type="InterPro" id="IPR048357">
    <property type="entry name" value="MSG_insertion"/>
</dbReference>
<dbReference type="NCBIfam" id="TIGR01345">
    <property type="entry name" value="malate_syn_G"/>
    <property type="match status" value="1"/>
</dbReference>
<dbReference type="NCBIfam" id="NF002825">
    <property type="entry name" value="PRK02999.1"/>
    <property type="match status" value="1"/>
</dbReference>
<dbReference type="PANTHER" id="PTHR42739">
    <property type="entry name" value="MALATE SYNTHASE G"/>
    <property type="match status" value="1"/>
</dbReference>
<dbReference type="PANTHER" id="PTHR42739:SF1">
    <property type="entry name" value="MALATE SYNTHASE G"/>
    <property type="match status" value="1"/>
</dbReference>
<dbReference type="Pfam" id="PF20659">
    <property type="entry name" value="MS_C"/>
    <property type="match status" value="1"/>
</dbReference>
<dbReference type="Pfam" id="PF20656">
    <property type="entry name" value="MS_N"/>
    <property type="match status" value="1"/>
</dbReference>
<dbReference type="Pfam" id="PF01274">
    <property type="entry name" value="MS_TIM-barrel"/>
    <property type="match status" value="1"/>
</dbReference>
<dbReference type="Pfam" id="PF20658">
    <property type="entry name" value="MSG_insertion"/>
    <property type="match status" value="1"/>
</dbReference>
<dbReference type="SUPFAM" id="SSF51645">
    <property type="entry name" value="Malate synthase G"/>
    <property type="match status" value="1"/>
</dbReference>
<name>MASZ_MYCSJ</name>
<accession>A3Q0E7</accession>
<comment type="function">
    <text evidence="1">Involved in the glycolate utilization. Catalyzes the condensation and subsequent hydrolysis of acetyl-coenzyme A (acetyl-CoA) and glyoxylate to form malate and CoA.</text>
</comment>
<comment type="catalytic activity">
    <reaction evidence="1">
        <text>glyoxylate + acetyl-CoA + H2O = (S)-malate + CoA + H(+)</text>
        <dbReference type="Rhea" id="RHEA:18181"/>
        <dbReference type="ChEBI" id="CHEBI:15377"/>
        <dbReference type="ChEBI" id="CHEBI:15378"/>
        <dbReference type="ChEBI" id="CHEBI:15589"/>
        <dbReference type="ChEBI" id="CHEBI:36655"/>
        <dbReference type="ChEBI" id="CHEBI:57287"/>
        <dbReference type="ChEBI" id="CHEBI:57288"/>
        <dbReference type="EC" id="2.3.3.9"/>
    </reaction>
</comment>
<comment type="cofactor">
    <cofactor evidence="1">
        <name>Mg(2+)</name>
        <dbReference type="ChEBI" id="CHEBI:18420"/>
    </cofactor>
</comment>
<comment type="pathway">
    <text evidence="1">Carbohydrate metabolism; glyoxylate cycle; (S)-malate from isocitrate: step 2/2.</text>
</comment>
<comment type="subunit">
    <text evidence="1">Monomer.</text>
</comment>
<comment type="subcellular location">
    <subcellularLocation>
        <location evidence="1">Cytoplasm</location>
    </subcellularLocation>
</comment>
<comment type="similarity">
    <text evidence="1">Belongs to the malate synthase family. GlcB subfamily.</text>
</comment>
<sequence length="731" mass="79879">MTDRVTVGNLRVARALYDFITDEALAGTDLDPDSFWSGVDKVVTDLTPRNQELLARRDDLQAQIDKWHRQRAIGPHDADEYKQFLTEIGYLEPDPGDFTITTAGVDDEITTTAGPQLVVPVLNARFALNAANARWGSLYDALYGTDVISDEDGAEKGTSYNRVRGDKVIAYAREFLDGAAPLASGSYADATGFRIEDGQVQVELGDDQWVGLAGPDQFVGYTGELGSPQWSILLRNNGLHIEILIDPDSPVGSTDKAGVKDVVLESAVTTIMDFEDSVAAVDAEDKVLGYRNWLGLNRGDLSEEVSKGDKTFTRVLNPDRTYTTPDGSGELTLPGRSLLFVRNVGHLMTNDAITDAEGNEVFEGIQDALFTGLIAMHGLKESDANGPLRNSRTGSVYIVKPKMHGPAEVAYTVDLFSRVEDVLGLPQNTLKVGIMDEERRTTLNLKACIKAAADRVVFINTGFLDRTGDEIHTSMEAGPMIRKGAMKSQPWIKAYEDQNVDVGLATGFSGRAQIGKGMWAMTDLMADMVEQKIGQPKAGATTAWVPSPTAATLHAMHYHQVDVYAVHKELEGKQRASLDDLLTIPLAKELAWAPEEIREEVDNNCQSILGYVVRWIDAGVGCSKVPDIHDIALMEDRATLRISSQLLANWLRHGVITEEDVKTSLRRMAAVVDEQNAKDPDFKPMATDPDSSIAFQAAQELILAGGTQPSGYTEPILHRRRREYKASVAGA</sequence>
<reference key="1">
    <citation type="submission" date="2007-02" db="EMBL/GenBank/DDBJ databases">
        <title>Complete sequence of Mycobacterium sp. JLS.</title>
        <authorList>
            <consortium name="US DOE Joint Genome Institute"/>
            <person name="Copeland A."/>
            <person name="Lucas S."/>
            <person name="Lapidus A."/>
            <person name="Barry K."/>
            <person name="Detter J.C."/>
            <person name="Glavina del Rio T."/>
            <person name="Hammon N."/>
            <person name="Israni S."/>
            <person name="Dalin E."/>
            <person name="Tice H."/>
            <person name="Pitluck S."/>
            <person name="Chain P."/>
            <person name="Malfatti S."/>
            <person name="Shin M."/>
            <person name="Vergez L."/>
            <person name="Schmutz J."/>
            <person name="Larimer F."/>
            <person name="Land M."/>
            <person name="Hauser L."/>
            <person name="Kyrpides N."/>
            <person name="Mikhailova N."/>
            <person name="Miller C.D."/>
            <person name="Anderson A.J."/>
            <person name="Sims R.C."/>
            <person name="Richardson P."/>
        </authorList>
    </citation>
    <scope>NUCLEOTIDE SEQUENCE [LARGE SCALE GENOMIC DNA]</scope>
    <source>
        <strain>JLS</strain>
    </source>
</reference>
<protein>
    <recommendedName>
        <fullName evidence="1">Malate synthase G</fullName>
        <ecNumber evidence="1">2.3.3.9</ecNumber>
    </recommendedName>
</protein>